<reference key="1">
    <citation type="submission" date="2008-10" db="EMBL/GenBank/DDBJ databases">
        <title>Genome sequence of Bacillus anthracis str. CDC 684.</title>
        <authorList>
            <person name="Dodson R.J."/>
            <person name="Munk A.C."/>
            <person name="Brettin T."/>
            <person name="Bruce D."/>
            <person name="Detter C."/>
            <person name="Tapia R."/>
            <person name="Han C."/>
            <person name="Sutton G."/>
            <person name="Sims D."/>
        </authorList>
    </citation>
    <scope>NUCLEOTIDE SEQUENCE [LARGE SCALE GENOMIC DNA]</scope>
    <source>
        <strain>CDC 684 / NRRL 3495</strain>
    </source>
</reference>
<accession>C3L6Z5</accession>
<name>HEM3_BACAC</name>
<comment type="function">
    <text evidence="1">Tetrapolymerization of the monopyrrole PBG into the hydroxymethylbilane pre-uroporphyrinogen in several discrete steps.</text>
</comment>
<comment type="catalytic activity">
    <reaction evidence="1">
        <text>4 porphobilinogen + H2O = hydroxymethylbilane + 4 NH4(+)</text>
        <dbReference type="Rhea" id="RHEA:13185"/>
        <dbReference type="ChEBI" id="CHEBI:15377"/>
        <dbReference type="ChEBI" id="CHEBI:28938"/>
        <dbReference type="ChEBI" id="CHEBI:57845"/>
        <dbReference type="ChEBI" id="CHEBI:58126"/>
        <dbReference type="EC" id="2.5.1.61"/>
    </reaction>
</comment>
<comment type="cofactor">
    <cofactor evidence="1">
        <name>dipyrromethane</name>
        <dbReference type="ChEBI" id="CHEBI:60342"/>
    </cofactor>
    <text evidence="1">Binds 1 dipyrromethane group covalently.</text>
</comment>
<comment type="pathway">
    <text evidence="1">Porphyrin-containing compound metabolism; protoporphyrin-IX biosynthesis; coproporphyrinogen-III from 5-aminolevulinate: step 2/4.</text>
</comment>
<comment type="subunit">
    <text evidence="1">Monomer.</text>
</comment>
<comment type="miscellaneous">
    <text evidence="1">The porphobilinogen subunits are added to the dipyrromethane group.</text>
</comment>
<comment type="similarity">
    <text evidence="1">Belongs to the HMBS family.</text>
</comment>
<feature type="chain" id="PRO_1000125652" description="Porphobilinogen deaminase">
    <location>
        <begin position="1"/>
        <end position="309"/>
    </location>
</feature>
<feature type="modified residue" description="S-(dipyrrolylmethanemethyl)cysteine" evidence="1">
    <location>
        <position position="241"/>
    </location>
</feature>
<protein>
    <recommendedName>
        <fullName evidence="1">Porphobilinogen deaminase</fullName>
        <shortName evidence="1">PBG</shortName>
        <ecNumber evidence="1">2.5.1.61</ecNumber>
    </recommendedName>
    <alternativeName>
        <fullName evidence="1">Hydroxymethylbilane synthase</fullName>
        <shortName evidence="1">HMBS</shortName>
    </alternativeName>
    <alternativeName>
        <fullName evidence="1">Pre-uroporphyrinogen synthase</fullName>
    </alternativeName>
</protein>
<evidence type="ECO:0000255" key="1">
    <source>
        <dbReference type="HAMAP-Rule" id="MF_00260"/>
    </source>
</evidence>
<proteinExistence type="inferred from homology"/>
<organism>
    <name type="scientific">Bacillus anthracis (strain CDC 684 / NRRL 3495)</name>
    <dbReference type="NCBI Taxonomy" id="568206"/>
    <lineage>
        <taxon>Bacteria</taxon>
        <taxon>Bacillati</taxon>
        <taxon>Bacillota</taxon>
        <taxon>Bacilli</taxon>
        <taxon>Bacillales</taxon>
        <taxon>Bacillaceae</taxon>
        <taxon>Bacillus</taxon>
        <taxon>Bacillus cereus group</taxon>
    </lineage>
</organism>
<gene>
    <name evidence="1" type="primary">hemC</name>
    <name type="ordered locus">BAMEG_4731</name>
</gene>
<keyword id="KW-0627">Porphyrin biosynthesis</keyword>
<keyword id="KW-0808">Transferase</keyword>
<sequence>MRKIIVGSRKSKLALTQTNWFIDQLKALGLPYEFEVKEIVTKGDVILDVTLSKVGGKGLFVKEIEHALLTKEIDMAVHSMKDMPAVLPEGLMIGCTPKRVDPRDAFISKSGASYKELAEGAILGTSSLRRSAQLLAARPDLQVKWIRGNIDTRLRKLKEEDYDAIILATAGLQRMGWDNEVITEHLDETLCVPAVGQGALAIECREDDKDLLQLLAHINDAVTEKTVAAERVFLHKLEGGCQVPIAGYATITENDAIELTALVGSMDGSVLLKETVVGTDPEKVGLEAADRLIKQGAKELILAANKGQQ</sequence>
<dbReference type="EC" id="2.5.1.61" evidence="1"/>
<dbReference type="EMBL" id="CP001215">
    <property type="protein sequence ID" value="ACP16681.1"/>
    <property type="molecule type" value="Genomic_DNA"/>
</dbReference>
<dbReference type="RefSeq" id="WP_001226429.1">
    <property type="nucleotide sequence ID" value="NC_012581.1"/>
</dbReference>
<dbReference type="SMR" id="C3L6Z5"/>
<dbReference type="GeneID" id="45024336"/>
<dbReference type="KEGG" id="bah:BAMEG_4731"/>
<dbReference type="HOGENOM" id="CLU_019704_0_2_9"/>
<dbReference type="UniPathway" id="UPA00251">
    <property type="reaction ID" value="UER00319"/>
</dbReference>
<dbReference type="GO" id="GO:0005737">
    <property type="term" value="C:cytoplasm"/>
    <property type="evidence" value="ECO:0007669"/>
    <property type="project" value="TreeGrafter"/>
</dbReference>
<dbReference type="GO" id="GO:0004418">
    <property type="term" value="F:hydroxymethylbilane synthase activity"/>
    <property type="evidence" value="ECO:0007669"/>
    <property type="project" value="UniProtKB-UniRule"/>
</dbReference>
<dbReference type="GO" id="GO:0006782">
    <property type="term" value="P:protoporphyrinogen IX biosynthetic process"/>
    <property type="evidence" value="ECO:0007669"/>
    <property type="project" value="UniProtKB-UniRule"/>
</dbReference>
<dbReference type="CDD" id="cd13646">
    <property type="entry name" value="PBP2_EcHMBS_like"/>
    <property type="match status" value="1"/>
</dbReference>
<dbReference type="FunFam" id="3.30.160.40:FF:000001">
    <property type="entry name" value="Porphobilinogen deaminase"/>
    <property type="match status" value="1"/>
</dbReference>
<dbReference type="FunFam" id="3.40.190.10:FF:000004">
    <property type="entry name" value="Porphobilinogen deaminase"/>
    <property type="match status" value="1"/>
</dbReference>
<dbReference type="FunFam" id="3.40.190.10:FF:000005">
    <property type="entry name" value="Porphobilinogen deaminase"/>
    <property type="match status" value="1"/>
</dbReference>
<dbReference type="Gene3D" id="3.40.190.10">
    <property type="entry name" value="Periplasmic binding protein-like II"/>
    <property type="match status" value="2"/>
</dbReference>
<dbReference type="Gene3D" id="3.30.160.40">
    <property type="entry name" value="Porphobilinogen deaminase, C-terminal domain"/>
    <property type="match status" value="1"/>
</dbReference>
<dbReference type="HAMAP" id="MF_00260">
    <property type="entry name" value="Porphobil_deam"/>
    <property type="match status" value="1"/>
</dbReference>
<dbReference type="InterPro" id="IPR000860">
    <property type="entry name" value="HemC"/>
</dbReference>
<dbReference type="InterPro" id="IPR022419">
    <property type="entry name" value="Porphobilin_deaminase_cofac_BS"/>
</dbReference>
<dbReference type="InterPro" id="IPR022417">
    <property type="entry name" value="Porphobilin_deaminase_N"/>
</dbReference>
<dbReference type="InterPro" id="IPR022418">
    <property type="entry name" value="Porphobilinogen_deaminase_C"/>
</dbReference>
<dbReference type="InterPro" id="IPR036803">
    <property type="entry name" value="Porphobilinogen_deaminase_C_sf"/>
</dbReference>
<dbReference type="NCBIfam" id="TIGR00212">
    <property type="entry name" value="hemC"/>
    <property type="match status" value="1"/>
</dbReference>
<dbReference type="PANTHER" id="PTHR11557">
    <property type="entry name" value="PORPHOBILINOGEN DEAMINASE"/>
    <property type="match status" value="1"/>
</dbReference>
<dbReference type="PANTHER" id="PTHR11557:SF0">
    <property type="entry name" value="PORPHOBILINOGEN DEAMINASE"/>
    <property type="match status" value="1"/>
</dbReference>
<dbReference type="Pfam" id="PF01379">
    <property type="entry name" value="Porphobil_deam"/>
    <property type="match status" value="1"/>
</dbReference>
<dbReference type="Pfam" id="PF03900">
    <property type="entry name" value="Porphobil_deamC"/>
    <property type="match status" value="1"/>
</dbReference>
<dbReference type="PIRSF" id="PIRSF001438">
    <property type="entry name" value="4pyrrol_synth_OHMeBilane_synth"/>
    <property type="match status" value="1"/>
</dbReference>
<dbReference type="PRINTS" id="PR00151">
    <property type="entry name" value="PORPHBDMNASE"/>
</dbReference>
<dbReference type="SUPFAM" id="SSF53850">
    <property type="entry name" value="Periplasmic binding protein-like II"/>
    <property type="match status" value="1"/>
</dbReference>
<dbReference type="SUPFAM" id="SSF54782">
    <property type="entry name" value="Porphobilinogen deaminase (hydroxymethylbilane synthase), C-terminal domain"/>
    <property type="match status" value="1"/>
</dbReference>
<dbReference type="PROSITE" id="PS00533">
    <property type="entry name" value="PORPHOBILINOGEN_DEAM"/>
    <property type="match status" value="1"/>
</dbReference>